<feature type="signal peptide" evidence="2">
    <location>
        <begin position="1"/>
        <end position="23"/>
    </location>
</feature>
<feature type="chain" id="PRO_0000439897" description="Potassium channel toxin alpha-KTx 23.3" evidence="6">
    <location>
        <begin position="24"/>
        <end position="57"/>
    </location>
</feature>
<feature type="site" description="Basic residue of the functional dyad">
    <location>
        <position position="45"/>
    </location>
</feature>
<feature type="site" description="Key residue for immunosuppressive and anti-inflammatory activities" evidence="3">
    <location>
        <position position="45"/>
    </location>
</feature>
<feature type="site" description="Aromatic residue of the functional dyad">
    <location>
        <position position="54"/>
    </location>
</feature>
<feature type="disulfide bond" evidence="1">
    <location>
        <begin position="26"/>
        <end position="46"/>
    </location>
</feature>
<feature type="disulfide bond" evidence="1">
    <location>
        <begin position="32"/>
        <end position="51"/>
    </location>
</feature>
<feature type="disulfide bond" evidence="1">
    <location>
        <begin position="36"/>
        <end position="53"/>
    </location>
</feature>
<feature type="disulfide bond" evidence="1">
    <location>
        <begin position="41"/>
        <end position="56"/>
    </location>
</feature>
<feature type="mutagenesis site" description="Complete loss of inhibition potency on human T cells (IL-2, TNF-alpha and IFN-gamma secretion)." evidence="3">
    <original>K</original>
    <variation>A</variation>
    <location>
        <position position="45"/>
    </location>
</feature>
<proteinExistence type="evidence at protein level"/>
<reference key="1">
    <citation type="journal article" date="2017" name="Toxicon">
        <title>St20, a new venomous animal derived natural peptide with immunosuppressive and anti-inflammatory activities.</title>
        <authorList>
            <person name="Xiao M."/>
            <person name="Ding L."/>
            <person name="Yang W."/>
            <person name="Chai L."/>
            <person name="Sun Y."/>
            <person name="Yang X."/>
            <person name="Li D."/>
            <person name="Zhang H."/>
            <person name="Li W."/>
            <person name="Cao Z."/>
            <person name="Wu Y."/>
            <person name="Li J."/>
            <person name="Li S."/>
            <person name="Chen Z."/>
        </authorList>
    </citation>
    <scope>NUCLEOTIDE SEQUENCE [MRNA]</scope>
    <scope>3D-STRUCTURE MODELING</scope>
    <scope>MUTAGENESIS OF LYS-45</scope>
    <source>
        <tissue>Venom gland</tissue>
    </source>
</reference>
<organism>
    <name type="scientific">Scorpiops tibetanus</name>
    <name type="common">Scorpion</name>
    <dbReference type="NCBI Taxonomy" id="500600"/>
    <lineage>
        <taxon>Eukaryota</taxon>
        <taxon>Metazoa</taxon>
        <taxon>Ecdysozoa</taxon>
        <taxon>Arthropoda</taxon>
        <taxon>Chelicerata</taxon>
        <taxon>Arachnida</taxon>
        <taxon>Scorpiones</taxon>
        <taxon>Iurida</taxon>
        <taxon>Chactoidea</taxon>
        <taxon>Euscorpiidae</taxon>
        <taxon>Scorpiopinae</taxon>
        <taxon>Scorpiopini</taxon>
        <taxon>Scorpiops</taxon>
    </lineage>
</organism>
<comment type="function">
    <text evidence="1 3">This toxin shows both immunosuppressive and anti-inflammatory activities (PubMed:28077339). It has the potential to inhibit human T cell activation, since it reduces IL-2 secretion and the expression of T cell activation marker CD69 and acts as an anti-inflammatory agent, since it provokes the reduction of secretion of both IFN-gamma and TNF-alpha (PubMed:28077339). In vivo, the delayed-type hypersensitivity response in rat autoimmune disease model is ameliorated in the presence of this toxin (PubMed:28077339). Acts by blocking Kv1.3/KCNA3 potassium channels of T-lymphocytes (By similarity).</text>
</comment>
<comment type="subcellular location">
    <subcellularLocation>
        <location evidence="1">Secreted</location>
    </subcellularLocation>
</comment>
<comment type="tissue specificity">
    <text evidence="6">Expressed by the venom gland.</text>
</comment>
<comment type="domain">
    <text evidence="5">Has the structural arrangement of an alpha-helix connected to antiparallel beta-sheets by disulfide bonds (CS-alpha/beta).</text>
</comment>
<comment type="miscellaneous">
    <text evidence="3">Negative results: recombinant toxin does not cause hemolysis in human erythrocytes.</text>
</comment>
<comment type="similarity">
    <text evidence="6">Belongs to the short scorpion toxin superfamily. Potassium channel inhibitor family. Alpha-KTx 23 subfamily.</text>
</comment>
<evidence type="ECO:0000250" key="1">
    <source>
        <dbReference type="UniProtKB" id="P0DJ31"/>
    </source>
</evidence>
<evidence type="ECO:0000255" key="2"/>
<evidence type="ECO:0000269" key="3">
    <source>
    </source>
</evidence>
<evidence type="ECO:0000303" key="4">
    <source>
    </source>
</evidence>
<evidence type="ECO:0000305" key="5"/>
<evidence type="ECO:0000305" key="6">
    <source>
    </source>
</evidence>
<protein>
    <recommendedName>
        <fullName evidence="4">Potassium channel toxin alpha-KTx 23.3</fullName>
    </recommendedName>
    <alternativeName>
        <fullName evidence="4">Toxin St20</fullName>
    </alternativeName>
</protein>
<accession>P0DP36</accession>
<name>KA233_SCOTI</name>
<sequence>MKMSIVIILLLFTCLIATNGASGTKCSGSPECVKFCRTKGCRNGKCMNRSCKCYLCS</sequence>
<keyword id="KW-1015">Disulfide bond</keyword>
<keyword id="KW-0872">Ion channel impairing toxin</keyword>
<keyword id="KW-0528">Neurotoxin</keyword>
<keyword id="KW-0632">Potassium channel impairing toxin</keyword>
<keyword id="KW-0964">Secreted</keyword>
<keyword id="KW-0732">Signal</keyword>
<keyword id="KW-0800">Toxin</keyword>
<dbReference type="SMR" id="P0DP36"/>
<dbReference type="GO" id="GO:0005576">
    <property type="term" value="C:extracellular region"/>
    <property type="evidence" value="ECO:0007669"/>
    <property type="project" value="UniProtKB-SubCell"/>
</dbReference>
<dbReference type="GO" id="GO:0008200">
    <property type="term" value="F:ion channel inhibitor activity"/>
    <property type="evidence" value="ECO:0007669"/>
    <property type="project" value="InterPro"/>
</dbReference>
<dbReference type="GO" id="GO:0015459">
    <property type="term" value="F:potassium channel regulator activity"/>
    <property type="evidence" value="ECO:0007669"/>
    <property type="project" value="UniProtKB-KW"/>
</dbReference>
<dbReference type="GO" id="GO:0090729">
    <property type="term" value="F:toxin activity"/>
    <property type="evidence" value="ECO:0007669"/>
    <property type="project" value="UniProtKB-KW"/>
</dbReference>
<dbReference type="Gene3D" id="3.30.30.10">
    <property type="entry name" value="Knottin, scorpion toxin-like"/>
    <property type="match status" value="1"/>
</dbReference>
<dbReference type="InterPro" id="IPR036574">
    <property type="entry name" value="Scorpion_toxin-like_sf"/>
</dbReference>
<dbReference type="InterPro" id="IPR001947">
    <property type="entry name" value="Scorpion_toxinS_K_inh"/>
</dbReference>
<dbReference type="Pfam" id="PF00451">
    <property type="entry name" value="Toxin_2"/>
    <property type="match status" value="1"/>
</dbReference>
<dbReference type="PRINTS" id="PR00286">
    <property type="entry name" value="CHARYBDTOXIN"/>
</dbReference>
<dbReference type="SUPFAM" id="SSF57095">
    <property type="entry name" value="Scorpion toxin-like"/>
    <property type="match status" value="1"/>
</dbReference>
<dbReference type="PROSITE" id="PS01138">
    <property type="entry name" value="SCORP_SHORT_TOXIN"/>
    <property type="match status" value="1"/>
</dbReference>